<accession>A9ACL8</accession>
<keyword id="KW-0963">Cytoplasm</keyword>
<keyword id="KW-0489">Methyltransferase</keyword>
<keyword id="KW-1185">Reference proteome</keyword>
<keyword id="KW-0698">rRNA processing</keyword>
<keyword id="KW-0949">S-adenosyl-L-methionine</keyword>
<keyword id="KW-0808">Transferase</keyword>
<proteinExistence type="inferred from homology"/>
<comment type="function">
    <text evidence="1">Specifically methylates the uridine in position 2552 of 23S rRNA at the 2'-O position of the ribose in the fully assembled 50S ribosomal subunit.</text>
</comment>
<comment type="catalytic activity">
    <reaction evidence="1">
        <text>uridine(2552) in 23S rRNA + S-adenosyl-L-methionine = 2'-O-methyluridine(2552) in 23S rRNA + S-adenosyl-L-homocysteine + H(+)</text>
        <dbReference type="Rhea" id="RHEA:42720"/>
        <dbReference type="Rhea" id="RHEA-COMP:10202"/>
        <dbReference type="Rhea" id="RHEA-COMP:10203"/>
        <dbReference type="ChEBI" id="CHEBI:15378"/>
        <dbReference type="ChEBI" id="CHEBI:57856"/>
        <dbReference type="ChEBI" id="CHEBI:59789"/>
        <dbReference type="ChEBI" id="CHEBI:65315"/>
        <dbReference type="ChEBI" id="CHEBI:74478"/>
        <dbReference type="EC" id="2.1.1.166"/>
    </reaction>
</comment>
<comment type="subcellular location">
    <subcellularLocation>
        <location evidence="1">Cytoplasm</location>
    </subcellularLocation>
</comment>
<comment type="similarity">
    <text evidence="1">Belongs to the class I-like SAM-binding methyltransferase superfamily. RNA methyltransferase RlmE family.</text>
</comment>
<feature type="chain" id="PRO_1000194981" description="Ribosomal RNA large subunit methyltransferase E">
    <location>
        <begin position="1"/>
        <end position="220"/>
    </location>
</feature>
<feature type="active site" description="Proton acceptor" evidence="1">
    <location>
        <position position="173"/>
    </location>
</feature>
<feature type="binding site" evidence="1">
    <location>
        <position position="60"/>
    </location>
    <ligand>
        <name>S-adenosyl-L-methionine</name>
        <dbReference type="ChEBI" id="CHEBI:59789"/>
    </ligand>
</feature>
<feature type="binding site" evidence="1">
    <location>
        <position position="62"/>
    </location>
    <ligand>
        <name>S-adenosyl-L-methionine</name>
        <dbReference type="ChEBI" id="CHEBI:59789"/>
    </ligand>
</feature>
<feature type="binding site" evidence="1">
    <location>
        <position position="92"/>
    </location>
    <ligand>
        <name>S-adenosyl-L-methionine</name>
        <dbReference type="ChEBI" id="CHEBI:59789"/>
    </ligand>
</feature>
<feature type="binding site" evidence="1">
    <location>
        <position position="108"/>
    </location>
    <ligand>
        <name>S-adenosyl-L-methionine</name>
        <dbReference type="ChEBI" id="CHEBI:59789"/>
    </ligand>
</feature>
<feature type="binding site" evidence="1">
    <location>
        <position position="133"/>
    </location>
    <ligand>
        <name>S-adenosyl-L-methionine</name>
        <dbReference type="ChEBI" id="CHEBI:59789"/>
    </ligand>
</feature>
<sequence>MAKNRFNQHWLHDHINDPYVKMAQREGYRARAAYKLKEIDEQDKLIRPGQVIVDLGAAPGSWSQYARNKLAQGKKRDAVREGGIDGTIVALDMLPMEPIADVHFIQGDFREDEVLHQLEAVLEGRTVDLVISDMAPNLSGVASADAARIEHVCDLALEFAQNHLKPDGALLVKCFHGSGYSQIVEKFKQQFKVVAPRKPKASRDKSSETFILGRHLKHPR</sequence>
<evidence type="ECO:0000255" key="1">
    <source>
        <dbReference type="HAMAP-Rule" id="MF_01547"/>
    </source>
</evidence>
<dbReference type="EC" id="2.1.1.166" evidence="1"/>
<dbReference type="EMBL" id="CP000868">
    <property type="protein sequence ID" value="ABX15709.1"/>
    <property type="molecule type" value="Genomic_DNA"/>
</dbReference>
<dbReference type="EMBL" id="AP009385">
    <property type="protein sequence ID" value="BAG43159.1"/>
    <property type="molecule type" value="Genomic_DNA"/>
</dbReference>
<dbReference type="RefSeq" id="WP_012213685.1">
    <property type="nucleotide sequence ID" value="NC_010084.1"/>
</dbReference>
<dbReference type="SMR" id="A9ACL8"/>
<dbReference type="STRING" id="395019.BMULJ_01219"/>
<dbReference type="KEGG" id="bmj:BMULJ_01219"/>
<dbReference type="KEGG" id="bmu:Bmul_2024"/>
<dbReference type="eggNOG" id="COG0293">
    <property type="taxonomic scope" value="Bacteria"/>
</dbReference>
<dbReference type="HOGENOM" id="CLU_009422_4_1_4"/>
<dbReference type="Proteomes" id="UP000008815">
    <property type="component" value="Chromosome 1"/>
</dbReference>
<dbReference type="GO" id="GO:0005737">
    <property type="term" value="C:cytoplasm"/>
    <property type="evidence" value="ECO:0007669"/>
    <property type="project" value="UniProtKB-SubCell"/>
</dbReference>
<dbReference type="GO" id="GO:0008650">
    <property type="term" value="F:rRNA (uridine-2'-O-)-methyltransferase activity"/>
    <property type="evidence" value="ECO:0007669"/>
    <property type="project" value="UniProtKB-UniRule"/>
</dbReference>
<dbReference type="FunFam" id="3.40.50.150:FF:000005">
    <property type="entry name" value="Ribosomal RNA large subunit methyltransferase E"/>
    <property type="match status" value="1"/>
</dbReference>
<dbReference type="Gene3D" id="3.40.50.150">
    <property type="entry name" value="Vaccinia Virus protein VP39"/>
    <property type="match status" value="1"/>
</dbReference>
<dbReference type="HAMAP" id="MF_01547">
    <property type="entry name" value="RNA_methyltr_E"/>
    <property type="match status" value="1"/>
</dbReference>
<dbReference type="InterPro" id="IPR050082">
    <property type="entry name" value="RNA_methyltr_RlmE"/>
</dbReference>
<dbReference type="InterPro" id="IPR002877">
    <property type="entry name" value="RNA_MeTrfase_FtsJ_dom"/>
</dbReference>
<dbReference type="InterPro" id="IPR015507">
    <property type="entry name" value="rRNA-MeTfrase_E"/>
</dbReference>
<dbReference type="InterPro" id="IPR029063">
    <property type="entry name" value="SAM-dependent_MTases_sf"/>
</dbReference>
<dbReference type="PANTHER" id="PTHR10920">
    <property type="entry name" value="RIBOSOMAL RNA METHYLTRANSFERASE"/>
    <property type="match status" value="1"/>
</dbReference>
<dbReference type="PANTHER" id="PTHR10920:SF18">
    <property type="entry name" value="RRNA METHYLTRANSFERASE 2, MITOCHONDRIAL"/>
    <property type="match status" value="1"/>
</dbReference>
<dbReference type="Pfam" id="PF01728">
    <property type="entry name" value="FtsJ"/>
    <property type="match status" value="1"/>
</dbReference>
<dbReference type="PIRSF" id="PIRSF005461">
    <property type="entry name" value="23S_rRNA_mtase"/>
    <property type="match status" value="1"/>
</dbReference>
<dbReference type="SUPFAM" id="SSF53335">
    <property type="entry name" value="S-adenosyl-L-methionine-dependent methyltransferases"/>
    <property type="match status" value="1"/>
</dbReference>
<organism>
    <name type="scientific">Burkholderia multivorans (strain ATCC 17616 / 249)</name>
    <dbReference type="NCBI Taxonomy" id="395019"/>
    <lineage>
        <taxon>Bacteria</taxon>
        <taxon>Pseudomonadati</taxon>
        <taxon>Pseudomonadota</taxon>
        <taxon>Betaproteobacteria</taxon>
        <taxon>Burkholderiales</taxon>
        <taxon>Burkholderiaceae</taxon>
        <taxon>Burkholderia</taxon>
        <taxon>Burkholderia cepacia complex</taxon>
    </lineage>
</organism>
<name>RLME_BURM1</name>
<reference key="1">
    <citation type="submission" date="2007-10" db="EMBL/GenBank/DDBJ databases">
        <title>Complete sequence of chromosome 1 of Burkholderia multivorans ATCC 17616.</title>
        <authorList>
            <person name="Copeland A."/>
            <person name="Lucas S."/>
            <person name="Lapidus A."/>
            <person name="Barry K."/>
            <person name="Glavina del Rio T."/>
            <person name="Dalin E."/>
            <person name="Tice H."/>
            <person name="Pitluck S."/>
            <person name="Chain P."/>
            <person name="Malfatti S."/>
            <person name="Shin M."/>
            <person name="Vergez L."/>
            <person name="Schmutz J."/>
            <person name="Larimer F."/>
            <person name="Land M."/>
            <person name="Hauser L."/>
            <person name="Kyrpides N."/>
            <person name="Kim E."/>
            <person name="Tiedje J."/>
            <person name="Richardson P."/>
        </authorList>
    </citation>
    <scope>NUCLEOTIDE SEQUENCE [LARGE SCALE GENOMIC DNA]</scope>
    <source>
        <strain>ATCC 17616 / 249</strain>
    </source>
</reference>
<reference key="2">
    <citation type="submission" date="2007-04" db="EMBL/GenBank/DDBJ databases">
        <title>Complete genome sequence of Burkholderia multivorans ATCC 17616.</title>
        <authorList>
            <person name="Ohtsubo Y."/>
            <person name="Yamashita A."/>
            <person name="Kurokawa K."/>
            <person name="Takami H."/>
            <person name="Yuhara S."/>
            <person name="Nishiyama E."/>
            <person name="Endo R."/>
            <person name="Miyazaki R."/>
            <person name="Ono A."/>
            <person name="Yano K."/>
            <person name="Ito M."/>
            <person name="Sota M."/>
            <person name="Yuji N."/>
            <person name="Hattori M."/>
            <person name="Tsuda M."/>
        </authorList>
    </citation>
    <scope>NUCLEOTIDE SEQUENCE [LARGE SCALE GENOMIC DNA]</scope>
    <source>
        <strain>ATCC 17616 / 249</strain>
    </source>
</reference>
<gene>
    <name evidence="1" type="primary">rlmE</name>
    <name evidence="1" type="synonym">ftsJ</name>
    <name evidence="1" type="synonym">rrmJ</name>
    <name type="ordered locus">Bmul_2024</name>
    <name type="ordered locus">BMULJ_01219</name>
</gene>
<protein>
    <recommendedName>
        <fullName evidence="1">Ribosomal RNA large subunit methyltransferase E</fullName>
        <ecNumber evidence="1">2.1.1.166</ecNumber>
    </recommendedName>
    <alternativeName>
        <fullName evidence="1">23S rRNA Um2552 methyltransferase</fullName>
    </alternativeName>
    <alternativeName>
        <fullName evidence="1">rRNA (uridine-2'-O-)-methyltransferase</fullName>
    </alternativeName>
</protein>